<keyword id="KW-1185">Reference proteome</keyword>
<keyword id="KW-0687">Ribonucleoprotein</keyword>
<keyword id="KW-0689">Ribosomal protein</keyword>
<keyword id="KW-0694">RNA-binding</keyword>
<keyword id="KW-0699">rRNA-binding</keyword>
<dbReference type="EMBL" id="CR954246">
    <property type="protein sequence ID" value="CAI87854.1"/>
    <property type="molecule type" value="Genomic_DNA"/>
</dbReference>
<dbReference type="SMR" id="Q3IJJ8"/>
<dbReference type="STRING" id="326442.PSHAa2817"/>
<dbReference type="KEGG" id="pha:PSHAa2817"/>
<dbReference type="PATRIC" id="fig|326442.8.peg.2716"/>
<dbReference type="eggNOG" id="COG0199">
    <property type="taxonomic scope" value="Bacteria"/>
</dbReference>
<dbReference type="HOGENOM" id="CLU_139869_0_1_6"/>
<dbReference type="BioCyc" id="PHAL326442:PSHA_RS13830-MONOMER"/>
<dbReference type="Proteomes" id="UP000006843">
    <property type="component" value="Chromosome I"/>
</dbReference>
<dbReference type="GO" id="GO:0005737">
    <property type="term" value="C:cytoplasm"/>
    <property type="evidence" value="ECO:0007669"/>
    <property type="project" value="UniProtKB-ARBA"/>
</dbReference>
<dbReference type="GO" id="GO:0015935">
    <property type="term" value="C:small ribosomal subunit"/>
    <property type="evidence" value="ECO:0007669"/>
    <property type="project" value="TreeGrafter"/>
</dbReference>
<dbReference type="GO" id="GO:0019843">
    <property type="term" value="F:rRNA binding"/>
    <property type="evidence" value="ECO:0007669"/>
    <property type="project" value="UniProtKB-UniRule"/>
</dbReference>
<dbReference type="GO" id="GO:0003735">
    <property type="term" value="F:structural constituent of ribosome"/>
    <property type="evidence" value="ECO:0007669"/>
    <property type="project" value="InterPro"/>
</dbReference>
<dbReference type="GO" id="GO:0006412">
    <property type="term" value="P:translation"/>
    <property type="evidence" value="ECO:0007669"/>
    <property type="project" value="UniProtKB-UniRule"/>
</dbReference>
<dbReference type="FunFam" id="1.10.287.1480:FF:000001">
    <property type="entry name" value="30S ribosomal protein S14"/>
    <property type="match status" value="1"/>
</dbReference>
<dbReference type="Gene3D" id="1.10.287.1480">
    <property type="match status" value="1"/>
</dbReference>
<dbReference type="HAMAP" id="MF_00537">
    <property type="entry name" value="Ribosomal_uS14_1"/>
    <property type="match status" value="1"/>
</dbReference>
<dbReference type="InterPro" id="IPR001209">
    <property type="entry name" value="Ribosomal_uS14"/>
</dbReference>
<dbReference type="InterPro" id="IPR023036">
    <property type="entry name" value="Ribosomal_uS14_bac/plastid"/>
</dbReference>
<dbReference type="InterPro" id="IPR018271">
    <property type="entry name" value="Ribosomal_uS14_CS"/>
</dbReference>
<dbReference type="NCBIfam" id="NF006477">
    <property type="entry name" value="PRK08881.1"/>
    <property type="match status" value="1"/>
</dbReference>
<dbReference type="PANTHER" id="PTHR19836">
    <property type="entry name" value="30S RIBOSOMAL PROTEIN S14"/>
    <property type="match status" value="1"/>
</dbReference>
<dbReference type="PANTHER" id="PTHR19836:SF19">
    <property type="entry name" value="SMALL RIBOSOMAL SUBUNIT PROTEIN US14M"/>
    <property type="match status" value="1"/>
</dbReference>
<dbReference type="Pfam" id="PF00253">
    <property type="entry name" value="Ribosomal_S14"/>
    <property type="match status" value="1"/>
</dbReference>
<dbReference type="SUPFAM" id="SSF57716">
    <property type="entry name" value="Glucocorticoid receptor-like (DNA-binding domain)"/>
    <property type="match status" value="1"/>
</dbReference>
<dbReference type="PROSITE" id="PS00527">
    <property type="entry name" value="RIBOSOMAL_S14"/>
    <property type="match status" value="1"/>
</dbReference>
<protein>
    <recommendedName>
        <fullName evidence="1">Small ribosomal subunit protein uS14</fullName>
    </recommendedName>
    <alternativeName>
        <fullName evidence="2">30S ribosomal protein S14</fullName>
    </alternativeName>
</protein>
<comment type="function">
    <text evidence="1">Binds 16S rRNA, required for the assembly of 30S particles and may also be responsible for determining the conformation of the 16S rRNA at the A site.</text>
</comment>
<comment type="subunit">
    <text evidence="1">Part of the 30S ribosomal subunit. Contacts proteins S3 and S10.</text>
</comment>
<comment type="similarity">
    <text evidence="1">Belongs to the universal ribosomal protein uS14 family.</text>
</comment>
<accession>Q3IJJ8</accession>
<name>RS14_PSET1</name>
<proteinExistence type="inferred from homology"/>
<evidence type="ECO:0000255" key="1">
    <source>
        <dbReference type="HAMAP-Rule" id="MF_00537"/>
    </source>
</evidence>
<evidence type="ECO:0000305" key="2"/>
<gene>
    <name evidence="1" type="primary">rpsN</name>
    <name type="ordered locus">PSHAa2817</name>
</gene>
<sequence>MAKNSMKAREAKRTKLVAQFAEKRTALKAIISDVNTSEDDRWDAVLKLQALPRDSSPVRQRNRCNITGRPHGFLRKFGMSRIKVREAAMRGEIPGLKKASW</sequence>
<reference key="1">
    <citation type="journal article" date="2005" name="Genome Res.">
        <title>Coping with cold: the genome of the versatile marine Antarctica bacterium Pseudoalteromonas haloplanktis TAC125.</title>
        <authorList>
            <person name="Medigue C."/>
            <person name="Krin E."/>
            <person name="Pascal G."/>
            <person name="Barbe V."/>
            <person name="Bernsel A."/>
            <person name="Bertin P.N."/>
            <person name="Cheung F."/>
            <person name="Cruveiller S."/>
            <person name="D'Amico S."/>
            <person name="Duilio A."/>
            <person name="Fang G."/>
            <person name="Feller G."/>
            <person name="Ho C."/>
            <person name="Mangenot S."/>
            <person name="Marino G."/>
            <person name="Nilsson J."/>
            <person name="Parrilli E."/>
            <person name="Rocha E.P.C."/>
            <person name="Rouy Z."/>
            <person name="Sekowska A."/>
            <person name="Tutino M.L."/>
            <person name="Vallenet D."/>
            <person name="von Heijne G."/>
            <person name="Danchin A."/>
        </authorList>
    </citation>
    <scope>NUCLEOTIDE SEQUENCE [LARGE SCALE GENOMIC DNA]</scope>
    <source>
        <strain>TAC 125</strain>
    </source>
</reference>
<feature type="chain" id="PRO_1000128515" description="Small ribosomal subunit protein uS14">
    <location>
        <begin position="1"/>
        <end position="101"/>
    </location>
</feature>
<organism>
    <name type="scientific">Pseudoalteromonas translucida (strain TAC 125)</name>
    <dbReference type="NCBI Taxonomy" id="326442"/>
    <lineage>
        <taxon>Bacteria</taxon>
        <taxon>Pseudomonadati</taxon>
        <taxon>Pseudomonadota</taxon>
        <taxon>Gammaproteobacteria</taxon>
        <taxon>Alteromonadales</taxon>
        <taxon>Pseudoalteromonadaceae</taxon>
        <taxon>Pseudoalteromonas</taxon>
    </lineage>
</organism>